<organism>
    <name type="scientific">Pseudoderopeltis flavescens</name>
    <name type="common">Cockroach</name>
    <dbReference type="NCBI Taxonomy" id="303916"/>
    <lineage>
        <taxon>Eukaryota</taxon>
        <taxon>Metazoa</taxon>
        <taxon>Ecdysozoa</taxon>
        <taxon>Arthropoda</taxon>
        <taxon>Hexapoda</taxon>
        <taxon>Insecta</taxon>
        <taxon>Pterygota</taxon>
        <taxon>Neoptera</taxon>
        <taxon>Polyneoptera</taxon>
        <taxon>Dictyoptera</taxon>
        <taxon>Blattodea</taxon>
        <taxon>Blattoidea</taxon>
        <taxon>Blattidae</taxon>
        <taxon>Blattinae</taxon>
        <taxon>Pseudoderopeltis</taxon>
    </lineage>
</organism>
<sequence>EQFDDYGHMRF</sequence>
<name>SK1_PSEFV</name>
<evidence type="ECO:0000250" key="1">
    <source>
        <dbReference type="UniProtKB" id="P41493"/>
    </source>
</evidence>
<evidence type="ECO:0000255" key="2"/>
<evidence type="ECO:0000269" key="3">
    <source>
    </source>
</evidence>
<evidence type="ECO:0000303" key="4">
    <source>
    </source>
</evidence>
<evidence type="ECO:0000305" key="5"/>
<reference evidence="5" key="1">
    <citation type="journal article" date="2009" name="BMC Evol. Biol.">
        <title>A proteomic approach for studying insect phylogeny: CAPA peptides of ancient insect taxa (Dictyoptera, Blattoptera) as a test case.</title>
        <authorList>
            <person name="Roth S."/>
            <person name="Fromm B."/>
            <person name="Gaede G."/>
            <person name="Predel R."/>
        </authorList>
    </citation>
    <scope>PROTEIN SEQUENCE</scope>
    <scope>AMIDATION AT PHE-11</scope>
    <source>
        <tissue evidence="3">Corpora cardiaca</tissue>
    </source>
</reference>
<proteinExistence type="evidence at protein level"/>
<protein>
    <recommendedName>
        <fullName evidence="4">Sulfakinin-1</fullName>
        <shortName evidence="4">PseFl-SK-1</shortName>
    </recommendedName>
</protein>
<keyword id="KW-0027">Amidation</keyword>
<keyword id="KW-0903">Direct protein sequencing</keyword>
<keyword id="KW-0372">Hormone</keyword>
<keyword id="KW-0527">Neuropeptide</keyword>
<keyword id="KW-0964">Secreted</keyword>
<keyword id="KW-0765">Sulfation</keyword>
<feature type="peptide" id="PRO_0000378898" description="Sulfakinin-1" evidence="3">
    <location>
        <begin position="1"/>
        <end position="11"/>
    </location>
</feature>
<feature type="modified residue" description="Sulfotyrosine" evidence="1">
    <location>
        <position position="6"/>
    </location>
</feature>
<feature type="modified residue" description="Phenylalanine amide" evidence="3">
    <location>
        <position position="11"/>
    </location>
</feature>
<accession>P85757</accession>
<comment type="function">
    <text evidence="1">Myotropic peptide.</text>
</comment>
<comment type="subcellular location">
    <subcellularLocation>
        <location evidence="5">Secreted</location>
    </subcellularLocation>
</comment>
<comment type="similarity">
    <text evidence="2">Belongs to the gastrin/cholecystokinin family.</text>
</comment>
<dbReference type="GO" id="GO:0005576">
    <property type="term" value="C:extracellular region"/>
    <property type="evidence" value="ECO:0007669"/>
    <property type="project" value="UniProtKB-SubCell"/>
</dbReference>
<dbReference type="GO" id="GO:0005179">
    <property type="term" value="F:hormone activity"/>
    <property type="evidence" value="ECO:0007669"/>
    <property type="project" value="UniProtKB-KW"/>
</dbReference>
<dbReference type="GO" id="GO:0007218">
    <property type="term" value="P:neuropeptide signaling pathway"/>
    <property type="evidence" value="ECO:0007669"/>
    <property type="project" value="UniProtKB-KW"/>
</dbReference>
<dbReference type="InterPro" id="IPR013152">
    <property type="entry name" value="Gastrin/cholecystokinin_CS"/>
</dbReference>
<dbReference type="InterPro" id="IPR013259">
    <property type="entry name" value="Sulfakinin"/>
</dbReference>
<dbReference type="Pfam" id="PF08257">
    <property type="entry name" value="Sulfakinin"/>
    <property type="match status" value="1"/>
</dbReference>
<dbReference type="PROSITE" id="PS00259">
    <property type="entry name" value="GASTRIN"/>
    <property type="match status" value="1"/>
</dbReference>